<proteinExistence type="inferred from homology"/>
<accession>P13018</accession>
<name>STA_ECOLX</name>
<evidence type="ECO:0000250" key="1">
    <source>
        <dbReference type="UniProtKB" id="P37506"/>
    </source>
</evidence>
<evidence type="ECO:0000255" key="2">
    <source>
        <dbReference type="PROSITE-ProRule" id="PRU00532"/>
    </source>
</evidence>
<evidence type="ECO:0000269" key="3">
    <source>
    </source>
</evidence>
<evidence type="ECO:0000269" key="4">
    <source>
    </source>
</evidence>
<evidence type="ECO:0000305" key="5"/>
<keyword id="KW-0012">Acyltransferase</keyword>
<keyword id="KW-0046">Antibiotic resistance</keyword>
<keyword id="KW-0614">Plasmid</keyword>
<keyword id="KW-0808">Transferase</keyword>
<reference key="1">
    <citation type="journal article" date="1989" name="Nucleic Acids Res.">
        <title>Nucleotide sequence of a plasmid born streptothricin-acetyl-transferase gene (sat-1).</title>
        <authorList>
            <person name="Heim U."/>
            <person name="Tietze E."/>
            <person name="Weschke W."/>
            <person name="Tschaepe H."/>
            <person name="Wobus U."/>
        </authorList>
    </citation>
    <scope>NUCLEOTIDE SEQUENCE [GENOMIC DNA]</scope>
    <source>
        <strain>IE 956 0180:H-</strain>
        <transposon>Tn1825</transposon>
    </source>
</reference>
<reference key="2">
    <citation type="journal article" date="1990" name="Nucleic Acids Res.">
        <title>Nucleotide sequence of the streptothricin-acetyl-transferase gene sat-2.</title>
        <authorList>
            <person name="Tietze E."/>
            <person name="Brevet J."/>
        </authorList>
    </citation>
    <scope>NUCLEOTIDE SEQUENCE [GENOMIC DNA]</scope>
    <source>
        <transposon>Tn1826</transposon>
    </source>
</reference>
<reference key="3">
    <citation type="journal article" date="1991" name="J. Bacteriol.">
        <title>Site-specific insertion of three structural gene cassettes in transposon Tn7.</title>
        <authorList>
            <person name="Sundstroem L."/>
            <person name="Roy P.H."/>
            <person name="Skoeld O."/>
        </authorList>
    </citation>
    <scope>NUCLEOTIDE SEQUENCE [GENOMIC DNA]</scope>
    <scope>FUNCTION</scope>
    <source>
        <plasmid>R483</plasmid>
        <transposon>Tn7</transposon>
    </source>
</reference>
<sequence length="174" mass="19671">MKISVIPEQVAETLDAENHFIVREVFDVHLSDQGFELSTRSVSPYRKDYISDDDSDEDSACYGAFIDQELVGKIELNSTWNDLASIEHIVVSHTHRGKGVAHSLIEFAKKWALSRQLLGIRLETQTNNVPACNLYAKCGFTLGGIDLFTYKTRPQVSNETAMYWYWFSGAQDDA</sequence>
<gene>
    <name type="primary">sat-1</name>
</gene>
<gene>
    <name type="primary">sat-2</name>
</gene>
<comment type="function">
    <text evidence="1 3">Involved in resistance to streptothricin, a broad-spectrum antibiotic produced by streptomycetes (PubMed:1850404). Detoxifies streptothricin via acetylation of the beta amino group of the first beta-lysyl moiety of streptothricin (By similarity).</text>
</comment>
<comment type="catalytic activity">
    <reaction evidence="1">
        <text>streptothricin F + acetyl-CoA = N(beta)-acetylstreptothricin F + CoA + H(+)</text>
        <dbReference type="Rhea" id="RHEA:57000"/>
        <dbReference type="ChEBI" id="CHEBI:15378"/>
        <dbReference type="ChEBI" id="CHEBI:57287"/>
        <dbReference type="ChEBI" id="CHEBI:57288"/>
        <dbReference type="ChEBI" id="CHEBI:60822"/>
        <dbReference type="ChEBI" id="CHEBI:141394"/>
    </reaction>
</comment>
<comment type="miscellaneous">
    <text evidence="3 4">Encoded in several related transposons, in (PubMed:2550905) encoded on an unnamed plasmid.</text>
</comment>
<comment type="similarity">
    <text evidence="5">Belongs to the acetyltransferase family. GNAT subfamily.</text>
</comment>
<feature type="chain" id="PRO_0000068588" description="Streptothricin acetyltransferase">
    <location>
        <begin position="1"/>
        <end position="174"/>
    </location>
</feature>
<feature type="domain" description="N-acetyltransferase" evidence="2">
    <location>
        <begin position="20"/>
        <end position="170"/>
    </location>
</feature>
<geneLocation type="plasmid">
    <name>R483</name>
</geneLocation>
<dbReference type="EC" id="2.3.-.-" evidence="1"/>
<dbReference type="EMBL" id="X15995">
    <property type="protein sequence ID" value="CAA34124.1"/>
    <property type="molecule type" value="Genomic_DNA"/>
</dbReference>
<dbReference type="EMBL" id="X51546">
    <property type="protein sequence ID" value="CAA35921.1"/>
    <property type="molecule type" value="Genomic_DNA"/>
</dbReference>
<dbReference type="EMBL" id="M63169">
    <property type="protein sequence ID" value="AAA27469.1"/>
    <property type="molecule type" value="Genomic_DNA"/>
</dbReference>
<dbReference type="PIR" id="S05574">
    <property type="entry name" value="S05574"/>
</dbReference>
<dbReference type="RefSeq" id="NP_065310.1">
    <property type="nucleotide sequence ID" value="NC_002525.1"/>
</dbReference>
<dbReference type="RefSeq" id="YP_004422907.1">
    <property type="nucleotide sequence ID" value="NC_015472.1"/>
</dbReference>
<dbReference type="SMR" id="P13018"/>
<dbReference type="CARD" id="ARO:3002895">
    <property type="molecule name" value="SAT-2"/>
    <property type="mechanism identifier" value="ARO:0001004"/>
    <property type="mechanism name" value="antibiotic inactivation"/>
</dbReference>
<dbReference type="KEGG" id="ag:CAA35921"/>
<dbReference type="GO" id="GO:0016747">
    <property type="term" value="F:acyltransferase activity, transferring groups other than amino-acyl groups"/>
    <property type="evidence" value="ECO:0007669"/>
    <property type="project" value="InterPro"/>
</dbReference>
<dbReference type="GO" id="GO:0046677">
    <property type="term" value="P:response to antibiotic"/>
    <property type="evidence" value="ECO:0007669"/>
    <property type="project" value="UniProtKB-KW"/>
</dbReference>
<dbReference type="CDD" id="cd04301">
    <property type="entry name" value="NAT_SF"/>
    <property type="match status" value="1"/>
</dbReference>
<dbReference type="Gene3D" id="3.40.630.30">
    <property type="match status" value="1"/>
</dbReference>
<dbReference type="InterPro" id="IPR016181">
    <property type="entry name" value="Acyl_CoA_acyltransferase"/>
</dbReference>
<dbReference type="InterPro" id="IPR050832">
    <property type="entry name" value="Bact_Acetyltransf"/>
</dbReference>
<dbReference type="InterPro" id="IPR000182">
    <property type="entry name" value="GNAT_dom"/>
</dbReference>
<dbReference type="InterPro" id="IPR008125">
    <property type="entry name" value="Streptothricin_AcTrfase"/>
</dbReference>
<dbReference type="NCBIfam" id="NF000358">
    <property type="entry name" value="sat2"/>
    <property type="match status" value="1"/>
</dbReference>
<dbReference type="PANTHER" id="PTHR43877:SF2">
    <property type="entry name" value="AMINOALKYLPHOSPHONATE N-ACETYLTRANSFERASE-RELATED"/>
    <property type="match status" value="1"/>
</dbReference>
<dbReference type="PANTHER" id="PTHR43877">
    <property type="entry name" value="AMINOALKYLPHOSPHONATE N-ACETYLTRANSFERASE-RELATED-RELATED"/>
    <property type="match status" value="1"/>
</dbReference>
<dbReference type="Pfam" id="PF00583">
    <property type="entry name" value="Acetyltransf_1"/>
    <property type="match status" value="1"/>
</dbReference>
<dbReference type="PRINTS" id="PR01754">
    <property type="entry name" value="SACTRNSFRASE"/>
</dbReference>
<dbReference type="SUPFAM" id="SSF55729">
    <property type="entry name" value="Acyl-CoA N-acyltransferases (Nat)"/>
    <property type="match status" value="1"/>
</dbReference>
<dbReference type="PROSITE" id="PS51186">
    <property type="entry name" value="GNAT"/>
    <property type="match status" value="1"/>
</dbReference>
<protein>
    <recommendedName>
        <fullName evidence="1">Streptothricin acetyltransferase</fullName>
        <ecNumber evidence="1">2.3.-.-</ecNumber>
    </recommendedName>
</protein>
<organism>
    <name type="scientific">Escherichia coli</name>
    <dbReference type="NCBI Taxonomy" id="562"/>
    <lineage>
        <taxon>Bacteria</taxon>
        <taxon>Pseudomonadati</taxon>
        <taxon>Pseudomonadota</taxon>
        <taxon>Gammaproteobacteria</taxon>
        <taxon>Enterobacterales</taxon>
        <taxon>Enterobacteriaceae</taxon>
        <taxon>Escherichia</taxon>
    </lineage>
</organism>